<reference key="1">
    <citation type="submission" date="2007-08" db="EMBL/GenBank/DDBJ databases">
        <authorList>
            <consortium name="The Vibrio harveyi Genome Sequencing Project"/>
            <person name="Bassler B."/>
            <person name="Clifton S.W."/>
            <person name="Fulton L."/>
            <person name="Delehaunty K."/>
            <person name="Fronick C."/>
            <person name="Harrison M."/>
            <person name="Markivic C."/>
            <person name="Fulton R."/>
            <person name="Tin-Wollam A.-M."/>
            <person name="Shah N."/>
            <person name="Pepin K."/>
            <person name="Nash W."/>
            <person name="Thiruvilangam P."/>
            <person name="Bhonagiri V."/>
            <person name="Waters C."/>
            <person name="Tu K.C."/>
            <person name="Irgon J."/>
            <person name="Wilson R.K."/>
        </authorList>
    </citation>
    <scope>NUCLEOTIDE SEQUENCE [LARGE SCALE GENOMIC DNA]</scope>
    <source>
        <strain>ATCC BAA-1116 / BB120</strain>
    </source>
</reference>
<gene>
    <name evidence="1" type="primary">xni</name>
    <name evidence="1" type="synonym">ygdG</name>
    <name type="ordered locus">VIBHAR_01189</name>
</gene>
<protein>
    <recommendedName>
        <fullName evidence="1">Flap endonuclease Xni</fullName>
        <shortName evidence="1">FEN</shortName>
        <ecNumber evidence="1">3.1.-.-</ecNumber>
    </recommendedName>
</protein>
<keyword id="KW-0238">DNA-binding</keyword>
<keyword id="KW-0255">Endonuclease</keyword>
<keyword id="KW-0378">Hydrolase</keyword>
<keyword id="KW-0460">Magnesium</keyword>
<keyword id="KW-0479">Metal-binding</keyword>
<keyword id="KW-0540">Nuclease</keyword>
<keyword id="KW-0630">Potassium</keyword>
<name>XNI_VIBC1</name>
<accession>A7MYB8</accession>
<comment type="function">
    <text evidence="1">Has flap endonuclease activity. During DNA replication, flap endonucleases cleave the 5'-overhanging flap structure that is generated by displacement synthesis when DNA polymerase encounters the 5'-end of a downstream Okazaki fragment.</text>
</comment>
<comment type="cofactor">
    <cofactor evidence="1">
        <name>Mg(2+)</name>
        <dbReference type="ChEBI" id="CHEBI:18420"/>
    </cofactor>
    <text evidence="1">Binds 2 Mg(2+) per subunit. Only one magnesium ion has a direct interaction with the protein, the other interactions are indirect.</text>
</comment>
<comment type="cofactor">
    <cofactor evidence="1">
        <name>K(+)</name>
        <dbReference type="ChEBI" id="CHEBI:29103"/>
    </cofactor>
    <text evidence="1">Binds 1 K(+) per subunit. The potassium ion strongly increases the affinity for DNA.</text>
</comment>
<comment type="similarity">
    <text evidence="1">Belongs to the Xni family.</text>
</comment>
<organism>
    <name type="scientific">Vibrio campbellii (strain ATCC BAA-1116)</name>
    <dbReference type="NCBI Taxonomy" id="2902295"/>
    <lineage>
        <taxon>Bacteria</taxon>
        <taxon>Pseudomonadati</taxon>
        <taxon>Pseudomonadota</taxon>
        <taxon>Gammaproteobacteria</taxon>
        <taxon>Vibrionales</taxon>
        <taxon>Vibrionaceae</taxon>
        <taxon>Vibrio</taxon>
    </lineage>
</organism>
<dbReference type="EC" id="3.1.-.-" evidence="1"/>
<dbReference type="EMBL" id="CP000789">
    <property type="protein sequence ID" value="ABU70178.1"/>
    <property type="molecule type" value="Genomic_DNA"/>
</dbReference>
<dbReference type="RefSeq" id="WP_012127170.1">
    <property type="nucleotide sequence ID" value="NC_009783.1"/>
</dbReference>
<dbReference type="SMR" id="A7MYB8"/>
<dbReference type="KEGG" id="vha:VIBHAR_01189"/>
<dbReference type="PATRIC" id="fig|338187.25.peg.1441"/>
<dbReference type="Proteomes" id="UP000008152">
    <property type="component" value="Chromosome I"/>
</dbReference>
<dbReference type="GO" id="GO:0008409">
    <property type="term" value="F:5'-3' exonuclease activity"/>
    <property type="evidence" value="ECO:0007669"/>
    <property type="project" value="InterPro"/>
</dbReference>
<dbReference type="GO" id="GO:0017108">
    <property type="term" value="F:5'-flap endonuclease activity"/>
    <property type="evidence" value="ECO:0007669"/>
    <property type="project" value="UniProtKB-UniRule"/>
</dbReference>
<dbReference type="GO" id="GO:0003677">
    <property type="term" value="F:DNA binding"/>
    <property type="evidence" value="ECO:0007669"/>
    <property type="project" value="UniProtKB-UniRule"/>
</dbReference>
<dbReference type="GO" id="GO:0000287">
    <property type="term" value="F:magnesium ion binding"/>
    <property type="evidence" value="ECO:0007669"/>
    <property type="project" value="UniProtKB-UniRule"/>
</dbReference>
<dbReference type="GO" id="GO:0030955">
    <property type="term" value="F:potassium ion binding"/>
    <property type="evidence" value="ECO:0007669"/>
    <property type="project" value="UniProtKB-UniRule"/>
</dbReference>
<dbReference type="GO" id="GO:0033567">
    <property type="term" value="P:DNA replication, Okazaki fragment processing"/>
    <property type="evidence" value="ECO:0007669"/>
    <property type="project" value="UniProtKB-UniRule"/>
</dbReference>
<dbReference type="CDD" id="cd09898">
    <property type="entry name" value="H3TH_53EXO"/>
    <property type="match status" value="1"/>
</dbReference>
<dbReference type="CDD" id="cd09859">
    <property type="entry name" value="PIN_53EXO"/>
    <property type="match status" value="1"/>
</dbReference>
<dbReference type="FunFam" id="1.10.150.20:FF:000003">
    <property type="entry name" value="DNA polymerase I"/>
    <property type="match status" value="1"/>
</dbReference>
<dbReference type="Gene3D" id="1.10.150.20">
    <property type="entry name" value="5' to 3' exonuclease, C-terminal subdomain"/>
    <property type="match status" value="1"/>
</dbReference>
<dbReference type="Gene3D" id="3.40.50.1010">
    <property type="entry name" value="5'-nuclease"/>
    <property type="match status" value="1"/>
</dbReference>
<dbReference type="HAMAP" id="MF_01192">
    <property type="entry name" value="Xni"/>
    <property type="match status" value="1"/>
</dbReference>
<dbReference type="InterPro" id="IPR020046">
    <property type="entry name" value="5-3_exonucl_a-hlix_arch_N"/>
</dbReference>
<dbReference type="InterPro" id="IPR002421">
    <property type="entry name" value="5-3_exonuclease"/>
</dbReference>
<dbReference type="InterPro" id="IPR036279">
    <property type="entry name" value="5-3_exonuclease_C_sf"/>
</dbReference>
<dbReference type="InterPro" id="IPR020045">
    <property type="entry name" value="DNA_polI_H3TH"/>
</dbReference>
<dbReference type="InterPro" id="IPR038969">
    <property type="entry name" value="FEN"/>
</dbReference>
<dbReference type="InterPro" id="IPR008918">
    <property type="entry name" value="HhH2"/>
</dbReference>
<dbReference type="InterPro" id="IPR029060">
    <property type="entry name" value="PIN-like_dom_sf"/>
</dbReference>
<dbReference type="InterPro" id="IPR022895">
    <property type="entry name" value="Xni"/>
</dbReference>
<dbReference type="NCBIfam" id="NF007017">
    <property type="entry name" value="PRK09482.1"/>
    <property type="match status" value="1"/>
</dbReference>
<dbReference type="PANTHER" id="PTHR42646:SF2">
    <property type="entry name" value="5'-3' EXONUCLEASE FAMILY PROTEIN"/>
    <property type="match status" value="1"/>
</dbReference>
<dbReference type="PANTHER" id="PTHR42646">
    <property type="entry name" value="FLAP ENDONUCLEASE XNI"/>
    <property type="match status" value="1"/>
</dbReference>
<dbReference type="Pfam" id="PF01367">
    <property type="entry name" value="5_3_exonuc"/>
    <property type="match status" value="1"/>
</dbReference>
<dbReference type="Pfam" id="PF02739">
    <property type="entry name" value="5_3_exonuc_N"/>
    <property type="match status" value="1"/>
</dbReference>
<dbReference type="SMART" id="SM00475">
    <property type="entry name" value="53EXOc"/>
    <property type="match status" value="1"/>
</dbReference>
<dbReference type="SMART" id="SM00279">
    <property type="entry name" value="HhH2"/>
    <property type="match status" value="1"/>
</dbReference>
<dbReference type="SUPFAM" id="SSF47807">
    <property type="entry name" value="5' to 3' exonuclease, C-terminal subdomain"/>
    <property type="match status" value="1"/>
</dbReference>
<dbReference type="SUPFAM" id="SSF88723">
    <property type="entry name" value="PIN domain-like"/>
    <property type="match status" value="1"/>
</dbReference>
<proteinExistence type="inferred from homology"/>
<sequence>MSIHLVIIDALNLIRRVHSAQPDPTDIARTITTTGRTLTRILSEAQPTHIIAVFDHHEQDRGWRAEILPDYKQNRKPMPEPLIKGLDALQQAWWEQGIDSLLSEGDEADDLVATLATKVASHGEKVTIVSTDKGYCQLLSPTLQIRDYFQHRWLDEPFIEKEFGVKPSQLADYWGLTGISSSQVPGVPGVGPKAAKEILTQFEDIEAAYASEELVPKYRKKLDEHIESARLCKRVAALKCDIDLGFNLQDIRFTGPNKAQ</sequence>
<feature type="chain" id="PRO_1000065886" description="Flap endonuclease Xni">
    <location>
        <begin position="1"/>
        <end position="260"/>
    </location>
</feature>
<feature type="domain" description="5'-3' exonuclease" evidence="1">
    <location>
        <begin position="165"/>
        <end position="259"/>
    </location>
</feature>
<feature type="region of interest" description="Interaction with DNA" evidence="1">
    <location>
        <begin position="189"/>
        <end position="194"/>
    </location>
</feature>
<feature type="binding site" evidence="1">
    <location>
        <position position="109"/>
    </location>
    <ligand>
        <name>Mg(2+)</name>
        <dbReference type="ChEBI" id="CHEBI:18420"/>
    </ligand>
</feature>
<feature type="binding site" evidence="1">
    <location>
        <position position="176"/>
    </location>
    <ligand>
        <name>K(+)</name>
        <dbReference type="ChEBI" id="CHEBI:29103"/>
    </ligand>
</feature>
<feature type="binding site" evidence="1">
    <location>
        <position position="185"/>
    </location>
    <ligand>
        <name>K(+)</name>
        <dbReference type="ChEBI" id="CHEBI:29103"/>
    </ligand>
</feature>
<feature type="binding site" evidence="1">
    <location>
        <position position="187"/>
    </location>
    <ligand>
        <name>K(+)</name>
        <dbReference type="ChEBI" id="CHEBI:29103"/>
    </ligand>
</feature>
<feature type="binding site" evidence="1">
    <location>
        <position position="190"/>
    </location>
    <ligand>
        <name>K(+)</name>
        <dbReference type="ChEBI" id="CHEBI:29103"/>
    </ligand>
</feature>
<evidence type="ECO:0000255" key="1">
    <source>
        <dbReference type="HAMAP-Rule" id="MF_01192"/>
    </source>
</evidence>